<reference key="1">
    <citation type="journal article" date="2006" name="Proc. Natl. Acad. Sci. U.S.A.">
        <title>Genome reduction in Leptospira borgpetersenii reflects limited transmission potential.</title>
        <authorList>
            <person name="Bulach D.M."/>
            <person name="Zuerner R.L."/>
            <person name="Wilson P."/>
            <person name="Seemann T."/>
            <person name="McGrath A."/>
            <person name="Cullen P.A."/>
            <person name="Davis J."/>
            <person name="Johnson M."/>
            <person name="Kuczek E."/>
            <person name="Alt D.P."/>
            <person name="Peterson-Burch B."/>
            <person name="Coppel R.L."/>
            <person name="Rood J.I."/>
            <person name="Davies J.K."/>
            <person name="Adler B."/>
        </authorList>
    </citation>
    <scope>NUCLEOTIDE SEQUENCE [LARGE SCALE GENOMIC DNA]</scope>
    <source>
        <strain>L550</strain>
    </source>
</reference>
<comment type="function">
    <text evidence="1">A translational regulator that binds mRNA to regulate translation initiation and/or mRNA stability. Usually binds in the 5'-UTR at or near the Shine-Dalgarno sequence preventing ribosome-binding, thus repressing translation. Its main target seems to be the major flagellin gene, while its function is anatagonized by FliW.</text>
</comment>
<comment type="subunit">
    <text evidence="1">Homodimer; the beta-strands of each monomer intercalate to form a hydrophobic core, while the alpha-helices form wings that extend away from the core.</text>
</comment>
<comment type="subcellular location">
    <subcellularLocation>
        <location evidence="1">Cytoplasm</location>
    </subcellularLocation>
</comment>
<comment type="similarity">
    <text evidence="1">Belongs to the CsrA/RsmA family.</text>
</comment>
<keyword id="KW-1005">Bacterial flagellum biogenesis</keyword>
<keyword id="KW-0963">Cytoplasm</keyword>
<keyword id="KW-0678">Repressor</keyword>
<keyword id="KW-0694">RNA-binding</keyword>
<keyword id="KW-0810">Translation regulation</keyword>
<feature type="chain" id="PRO_1000023397" description="Translational regulator CsrA">
    <location>
        <begin position="1"/>
        <end position="84"/>
    </location>
</feature>
<name>CSRA_LEPBL</name>
<protein>
    <recommendedName>
        <fullName evidence="1">Translational regulator CsrA</fullName>
    </recommendedName>
</protein>
<organism>
    <name type="scientific">Leptospira borgpetersenii serovar Hardjo-bovis (strain L550)</name>
    <dbReference type="NCBI Taxonomy" id="355276"/>
    <lineage>
        <taxon>Bacteria</taxon>
        <taxon>Pseudomonadati</taxon>
        <taxon>Spirochaetota</taxon>
        <taxon>Spirochaetia</taxon>
        <taxon>Leptospirales</taxon>
        <taxon>Leptospiraceae</taxon>
        <taxon>Leptospira</taxon>
    </lineage>
</organism>
<proteinExistence type="inferred from homology"/>
<evidence type="ECO:0000255" key="1">
    <source>
        <dbReference type="HAMAP-Rule" id="MF_00167"/>
    </source>
</evidence>
<accession>Q056M2</accession>
<sequence>MLVLARRTNESIMIGDDIEIVIVDIKGDQVKIGVKAPRNVSVHRAEVYKDIQEENRKAAETKIKPEDLGKIGDILKKKDSGKKG</sequence>
<gene>
    <name evidence="1" type="primary">csrA</name>
    <name type="ordered locus">LBL_0100</name>
</gene>
<dbReference type="EMBL" id="CP000348">
    <property type="protein sequence ID" value="ABJ77723.1"/>
    <property type="molecule type" value="Genomic_DNA"/>
</dbReference>
<dbReference type="RefSeq" id="WP_011669197.1">
    <property type="nucleotide sequence ID" value="NC_008508.1"/>
</dbReference>
<dbReference type="SMR" id="Q056M2"/>
<dbReference type="GeneID" id="61175414"/>
<dbReference type="KEGG" id="lbl:LBL_0100"/>
<dbReference type="HOGENOM" id="CLU_164837_0_0_12"/>
<dbReference type="GO" id="GO:0005829">
    <property type="term" value="C:cytosol"/>
    <property type="evidence" value="ECO:0007669"/>
    <property type="project" value="TreeGrafter"/>
</dbReference>
<dbReference type="GO" id="GO:0048027">
    <property type="term" value="F:mRNA 5'-UTR binding"/>
    <property type="evidence" value="ECO:0007669"/>
    <property type="project" value="UniProtKB-UniRule"/>
</dbReference>
<dbReference type="GO" id="GO:0044781">
    <property type="term" value="P:bacterial-type flagellum organization"/>
    <property type="evidence" value="ECO:0007669"/>
    <property type="project" value="UniProtKB-KW"/>
</dbReference>
<dbReference type="GO" id="GO:0006402">
    <property type="term" value="P:mRNA catabolic process"/>
    <property type="evidence" value="ECO:0007669"/>
    <property type="project" value="InterPro"/>
</dbReference>
<dbReference type="GO" id="GO:0045947">
    <property type="term" value="P:negative regulation of translational initiation"/>
    <property type="evidence" value="ECO:0007669"/>
    <property type="project" value="UniProtKB-UniRule"/>
</dbReference>
<dbReference type="GO" id="GO:1902208">
    <property type="term" value="P:regulation of bacterial-type flagellum assembly"/>
    <property type="evidence" value="ECO:0007669"/>
    <property type="project" value="UniProtKB-UniRule"/>
</dbReference>
<dbReference type="GO" id="GO:0006109">
    <property type="term" value="P:regulation of carbohydrate metabolic process"/>
    <property type="evidence" value="ECO:0007669"/>
    <property type="project" value="InterPro"/>
</dbReference>
<dbReference type="FunFam" id="2.60.40.4380:FF:000002">
    <property type="entry name" value="Translational regulator CsrA"/>
    <property type="match status" value="1"/>
</dbReference>
<dbReference type="Gene3D" id="2.60.40.4380">
    <property type="entry name" value="Translational regulator CsrA"/>
    <property type="match status" value="1"/>
</dbReference>
<dbReference type="HAMAP" id="MF_00167">
    <property type="entry name" value="CsrA"/>
    <property type="match status" value="1"/>
</dbReference>
<dbReference type="InterPro" id="IPR003751">
    <property type="entry name" value="CsrA"/>
</dbReference>
<dbReference type="InterPro" id="IPR036107">
    <property type="entry name" value="CsrA_sf"/>
</dbReference>
<dbReference type="NCBIfam" id="TIGR00202">
    <property type="entry name" value="csrA"/>
    <property type="match status" value="1"/>
</dbReference>
<dbReference type="NCBIfam" id="NF002469">
    <property type="entry name" value="PRK01712.1"/>
    <property type="match status" value="1"/>
</dbReference>
<dbReference type="PANTHER" id="PTHR34984">
    <property type="entry name" value="CARBON STORAGE REGULATOR"/>
    <property type="match status" value="1"/>
</dbReference>
<dbReference type="PANTHER" id="PTHR34984:SF1">
    <property type="entry name" value="CARBON STORAGE REGULATOR"/>
    <property type="match status" value="1"/>
</dbReference>
<dbReference type="Pfam" id="PF02599">
    <property type="entry name" value="CsrA"/>
    <property type="match status" value="1"/>
</dbReference>
<dbReference type="SUPFAM" id="SSF117130">
    <property type="entry name" value="CsrA-like"/>
    <property type="match status" value="1"/>
</dbReference>